<feature type="chain" id="PRO_1000100366" description="Ribonuclease P protein component">
    <location>
        <begin position="1"/>
        <end position="123"/>
    </location>
</feature>
<keyword id="KW-0255">Endonuclease</keyword>
<keyword id="KW-0378">Hydrolase</keyword>
<keyword id="KW-0540">Nuclease</keyword>
<keyword id="KW-0694">RNA-binding</keyword>
<keyword id="KW-0819">tRNA processing</keyword>
<sequence length="123" mass="14525">MQRSQRLRSPRDFRRVREGGRTWSHPLLVLSVAPARANRVRCGIVVRKSLGTAVERNRYKRQVREATRLVYDQIRPGWDVIFIVRAGFRTAAWEQIQQAVSRLLQQAQLWHDREQPSQEDRHG</sequence>
<organism>
    <name type="scientific">Herpetosiphon aurantiacus (strain ATCC 23779 / DSM 785 / 114-95)</name>
    <dbReference type="NCBI Taxonomy" id="316274"/>
    <lineage>
        <taxon>Bacteria</taxon>
        <taxon>Bacillati</taxon>
        <taxon>Chloroflexota</taxon>
        <taxon>Chloroflexia</taxon>
        <taxon>Herpetosiphonales</taxon>
        <taxon>Herpetosiphonaceae</taxon>
        <taxon>Herpetosiphon</taxon>
    </lineage>
</organism>
<proteinExistence type="inferred from homology"/>
<protein>
    <recommendedName>
        <fullName evidence="1">Ribonuclease P protein component</fullName>
        <shortName evidence="1">RNase P protein</shortName>
        <shortName evidence="1">RNaseP protein</shortName>
        <ecNumber evidence="1">3.1.26.5</ecNumber>
    </recommendedName>
    <alternativeName>
        <fullName evidence="1">Protein C5</fullName>
    </alternativeName>
</protein>
<gene>
    <name evidence="1" type="primary">rnpA</name>
    <name type="ordered locus">Haur_0766</name>
</gene>
<name>RNPA_HERA2</name>
<comment type="function">
    <text evidence="1">RNaseP catalyzes the removal of the 5'-leader sequence from pre-tRNA to produce the mature 5'-terminus. It can also cleave other RNA substrates such as 4.5S RNA. The protein component plays an auxiliary but essential role in vivo by binding to the 5'-leader sequence and broadening the substrate specificity of the ribozyme.</text>
</comment>
<comment type="catalytic activity">
    <reaction evidence="1">
        <text>Endonucleolytic cleavage of RNA, removing 5'-extranucleotides from tRNA precursor.</text>
        <dbReference type="EC" id="3.1.26.5"/>
    </reaction>
</comment>
<comment type="subunit">
    <text evidence="1">Consists of a catalytic RNA component (M1 or rnpB) and a protein subunit.</text>
</comment>
<comment type="similarity">
    <text evidence="1">Belongs to the RnpA family.</text>
</comment>
<accession>A9AXK0</accession>
<reference key="1">
    <citation type="journal article" date="2011" name="Stand. Genomic Sci.">
        <title>Complete genome sequence of the filamentous gliding predatory bacterium Herpetosiphon aurantiacus type strain (114-95(T)).</title>
        <authorList>
            <person name="Kiss H."/>
            <person name="Nett M."/>
            <person name="Domin N."/>
            <person name="Martin K."/>
            <person name="Maresca J.A."/>
            <person name="Copeland A."/>
            <person name="Lapidus A."/>
            <person name="Lucas S."/>
            <person name="Berry K.W."/>
            <person name="Glavina Del Rio T."/>
            <person name="Dalin E."/>
            <person name="Tice H."/>
            <person name="Pitluck S."/>
            <person name="Richardson P."/>
            <person name="Bruce D."/>
            <person name="Goodwin L."/>
            <person name="Han C."/>
            <person name="Detter J.C."/>
            <person name="Schmutz J."/>
            <person name="Brettin T."/>
            <person name="Land M."/>
            <person name="Hauser L."/>
            <person name="Kyrpides N.C."/>
            <person name="Ivanova N."/>
            <person name="Goeker M."/>
            <person name="Woyke T."/>
            <person name="Klenk H.P."/>
            <person name="Bryant D.A."/>
        </authorList>
    </citation>
    <scope>NUCLEOTIDE SEQUENCE [LARGE SCALE GENOMIC DNA]</scope>
    <source>
        <strain>ATCC 23779 / DSM 785 / 114-95</strain>
    </source>
</reference>
<evidence type="ECO:0000255" key="1">
    <source>
        <dbReference type="HAMAP-Rule" id="MF_00227"/>
    </source>
</evidence>
<dbReference type="EC" id="3.1.26.5" evidence="1"/>
<dbReference type="EMBL" id="CP000875">
    <property type="protein sequence ID" value="ABX03414.1"/>
    <property type="molecule type" value="Genomic_DNA"/>
</dbReference>
<dbReference type="SMR" id="A9AXK0"/>
<dbReference type="FunCoup" id="A9AXK0">
    <property type="interactions" value="223"/>
</dbReference>
<dbReference type="STRING" id="316274.Haur_0766"/>
<dbReference type="KEGG" id="hau:Haur_0766"/>
<dbReference type="eggNOG" id="COG0594">
    <property type="taxonomic scope" value="Bacteria"/>
</dbReference>
<dbReference type="HOGENOM" id="CLU_117179_6_2_0"/>
<dbReference type="InParanoid" id="A9AXK0"/>
<dbReference type="Proteomes" id="UP000000787">
    <property type="component" value="Chromosome"/>
</dbReference>
<dbReference type="GO" id="GO:0030677">
    <property type="term" value="C:ribonuclease P complex"/>
    <property type="evidence" value="ECO:0007669"/>
    <property type="project" value="TreeGrafter"/>
</dbReference>
<dbReference type="GO" id="GO:0042781">
    <property type="term" value="F:3'-tRNA processing endoribonuclease activity"/>
    <property type="evidence" value="ECO:0007669"/>
    <property type="project" value="TreeGrafter"/>
</dbReference>
<dbReference type="GO" id="GO:0004526">
    <property type="term" value="F:ribonuclease P activity"/>
    <property type="evidence" value="ECO:0007669"/>
    <property type="project" value="UniProtKB-UniRule"/>
</dbReference>
<dbReference type="GO" id="GO:0000049">
    <property type="term" value="F:tRNA binding"/>
    <property type="evidence" value="ECO:0007669"/>
    <property type="project" value="UniProtKB-UniRule"/>
</dbReference>
<dbReference type="GO" id="GO:0001682">
    <property type="term" value="P:tRNA 5'-leader removal"/>
    <property type="evidence" value="ECO:0007669"/>
    <property type="project" value="UniProtKB-UniRule"/>
</dbReference>
<dbReference type="Gene3D" id="3.30.230.10">
    <property type="match status" value="1"/>
</dbReference>
<dbReference type="HAMAP" id="MF_00227">
    <property type="entry name" value="RNase_P"/>
    <property type="match status" value="1"/>
</dbReference>
<dbReference type="InterPro" id="IPR020568">
    <property type="entry name" value="Ribosomal_Su5_D2-typ_SF"/>
</dbReference>
<dbReference type="InterPro" id="IPR014721">
    <property type="entry name" value="Ribsml_uS5_D2-typ_fold_subgr"/>
</dbReference>
<dbReference type="InterPro" id="IPR000100">
    <property type="entry name" value="RNase_P"/>
</dbReference>
<dbReference type="NCBIfam" id="TIGR00188">
    <property type="entry name" value="rnpA"/>
    <property type="match status" value="1"/>
</dbReference>
<dbReference type="PANTHER" id="PTHR33992">
    <property type="entry name" value="RIBONUCLEASE P PROTEIN COMPONENT"/>
    <property type="match status" value="1"/>
</dbReference>
<dbReference type="PANTHER" id="PTHR33992:SF1">
    <property type="entry name" value="RIBONUCLEASE P PROTEIN COMPONENT"/>
    <property type="match status" value="1"/>
</dbReference>
<dbReference type="Pfam" id="PF00825">
    <property type="entry name" value="Ribonuclease_P"/>
    <property type="match status" value="1"/>
</dbReference>
<dbReference type="SUPFAM" id="SSF54211">
    <property type="entry name" value="Ribosomal protein S5 domain 2-like"/>
    <property type="match status" value="1"/>
</dbReference>